<protein>
    <recommendedName>
        <fullName>RNA polymerase sigma-54 factor</fullName>
    </recommendedName>
</protein>
<keyword id="KW-0238">DNA-binding</keyword>
<keyword id="KW-0240">DNA-directed RNA polymerase</keyword>
<keyword id="KW-0535">Nitrogen fixation</keyword>
<keyword id="KW-0548">Nucleotidyltransferase</keyword>
<keyword id="KW-1185">Reference proteome</keyword>
<keyword id="KW-0731">Sigma factor</keyword>
<keyword id="KW-0804">Transcription</keyword>
<keyword id="KW-0805">Transcription regulation</keyword>
<keyword id="KW-0808">Transferase</keyword>
<dbReference type="EMBL" id="X12358">
    <property type="protein sequence ID" value="CAA30919.1"/>
    <property type="molecule type" value="Genomic_DNA"/>
</dbReference>
<dbReference type="EMBL" id="CP001312">
    <property type="protein sequence ID" value="ADE84333.1"/>
    <property type="molecule type" value="Genomic_DNA"/>
</dbReference>
<dbReference type="PIR" id="S04848">
    <property type="entry name" value="S04848"/>
</dbReference>
<dbReference type="RefSeq" id="WP_013066312.1">
    <property type="nucleotide sequence ID" value="NC_014034.1"/>
</dbReference>
<dbReference type="SMR" id="D5ANH9"/>
<dbReference type="STRING" id="272942.RCAP_rcc00568"/>
<dbReference type="GeneID" id="31489519"/>
<dbReference type="KEGG" id="rcp:RCAP_rcc00568"/>
<dbReference type="eggNOG" id="COG1508">
    <property type="taxonomic scope" value="Bacteria"/>
</dbReference>
<dbReference type="HOGENOM" id="CLU_020569_0_0_5"/>
<dbReference type="OrthoDB" id="9814402at2"/>
<dbReference type="Proteomes" id="UP000002361">
    <property type="component" value="Chromosome"/>
</dbReference>
<dbReference type="GO" id="GO:0000428">
    <property type="term" value="C:DNA-directed RNA polymerase complex"/>
    <property type="evidence" value="ECO:0007669"/>
    <property type="project" value="UniProtKB-KW"/>
</dbReference>
<dbReference type="GO" id="GO:0003677">
    <property type="term" value="F:DNA binding"/>
    <property type="evidence" value="ECO:0007669"/>
    <property type="project" value="UniProtKB-KW"/>
</dbReference>
<dbReference type="GO" id="GO:0001216">
    <property type="term" value="F:DNA-binding transcription activator activity"/>
    <property type="evidence" value="ECO:0007669"/>
    <property type="project" value="InterPro"/>
</dbReference>
<dbReference type="GO" id="GO:0016779">
    <property type="term" value="F:nucleotidyltransferase activity"/>
    <property type="evidence" value="ECO:0007669"/>
    <property type="project" value="UniProtKB-KW"/>
</dbReference>
<dbReference type="GO" id="GO:0016987">
    <property type="term" value="F:sigma factor activity"/>
    <property type="evidence" value="ECO:0007669"/>
    <property type="project" value="UniProtKB-KW"/>
</dbReference>
<dbReference type="GO" id="GO:0006352">
    <property type="term" value="P:DNA-templated transcription initiation"/>
    <property type="evidence" value="ECO:0007669"/>
    <property type="project" value="InterPro"/>
</dbReference>
<dbReference type="GO" id="GO:0009399">
    <property type="term" value="P:nitrogen fixation"/>
    <property type="evidence" value="ECO:0007669"/>
    <property type="project" value="UniProtKB-KW"/>
</dbReference>
<dbReference type="Gene3D" id="1.10.10.60">
    <property type="entry name" value="Homeodomain-like"/>
    <property type="match status" value="1"/>
</dbReference>
<dbReference type="Gene3D" id="1.10.10.1330">
    <property type="entry name" value="RNA polymerase sigma-54 factor, core-binding domain"/>
    <property type="match status" value="1"/>
</dbReference>
<dbReference type="InterPro" id="IPR000394">
    <property type="entry name" value="RNA_pol_sigma_54"/>
</dbReference>
<dbReference type="InterPro" id="IPR007046">
    <property type="entry name" value="RNA_pol_sigma_54_core-bd"/>
</dbReference>
<dbReference type="InterPro" id="IPR007634">
    <property type="entry name" value="RNA_pol_sigma_54_DNA-bd"/>
</dbReference>
<dbReference type="InterPro" id="IPR038709">
    <property type="entry name" value="RpoN_core-bd_sf"/>
</dbReference>
<dbReference type="NCBIfam" id="TIGR02395">
    <property type="entry name" value="rpoN_sigma"/>
    <property type="match status" value="1"/>
</dbReference>
<dbReference type="PANTHER" id="PTHR32248">
    <property type="entry name" value="RNA POLYMERASE SIGMA-54 FACTOR"/>
    <property type="match status" value="1"/>
</dbReference>
<dbReference type="PANTHER" id="PTHR32248:SF4">
    <property type="entry name" value="RNA POLYMERASE SIGMA-54 FACTOR"/>
    <property type="match status" value="1"/>
</dbReference>
<dbReference type="Pfam" id="PF00309">
    <property type="entry name" value="Sigma54_AID"/>
    <property type="match status" value="1"/>
</dbReference>
<dbReference type="Pfam" id="PF04963">
    <property type="entry name" value="Sigma54_CBD"/>
    <property type="match status" value="1"/>
</dbReference>
<dbReference type="Pfam" id="PF04552">
    <property type="entry name" value="Sigma54_DBD"/>
    <property type="match status" value="1"/>
</dbReference>
<dbReference type="PIRSF" id="PIRSF000774">
    <property type="entry name" value="RpoN"/>
    <property type="match status" value="1"/>
</dbReference>
<dbReference type="PRINTS" id="PR00045">
    <property type="entry name" value="SIGMA54FCT"/>
</dbReference>
<dbReference type="PROSITE" id="PS00717">
    <property type="entry name" value="SIGMA54_1"/>
    <property type="match status" value="1"/>
</dbReference>
<dbReference type="PROSITE" id="PS00718">
    <property type="entry name" value="SIGMA54_2"/>
    <property type="match status" value="1"/>
</dbReference>
<dbReference type="PROSITE" id="PS50044">
    <property type="entry name" value="SIGMA54_3"/>
    <property type="match status" value="1"/>
</dbReference>
<sequence>MELAQTLSQRQTMQMAGQMLHSLAILGMSSQDLSEHLTEQATSNPFLTYRAPPAFIARGGEDFDAVAAVAAHKPSLMAHVVDQIEMAFTETPDRLLALRFAEALEPSGWLGQSLDSIALAAGVSLSRAESMLAVLQGFEPTGLFARDLSDCLILQAREADILTWEVETLIRNIRLIAENRLSDLADLCDCDIGDIPEIIKQIRHLNPKPGLAFDHQPTPVFPPDLIAVRGAEGWTVELNRATSPTITVREDRFADGTADAKARAERRKALAEARALAQALERRGDTLLRTAAVLVARQSAFLDKGPAHLVPLTLEDVASELGLHASTISRAVSGRMIQTQTRALPLRAFFSRAVSTQGGGEAVSRDSALDFVQRTVGGEDPQNPLSDDAIVTLAERAGLRIARRTVAKYRSTLGLASSYERRRAAAAR</sequence>
<name>RP54_RHOCB</name>
<feature type="chain" id="PRO_0000409932" description="RNA polymerase sigma-54 factor">
    <location>
        <begin position="1"/>
        <end position="428"/>
    </location>
</feature>
<feature type="DNA-binding region" description="H-T-H motif" evidence="1">
    <location>
        <begin position="313"/>
        <end position="332"/>
    </location>
</feature>
<feature type="short sequence motif" description="RPON box">
    <location>
        <begin position="402"/>
        <end position="410"/>
    </location>
</feature>
<feature type="sequence conflict" description="In Ref. 1; CAA30919." evidence="2" ref="1">
    <original>A</original>
    <variation>G</variation>
    <location>
        <position position="67"/>
    </location>
</feature>
<feature type="sequence conflict" description="In Ref. 1; CAA30919." evidence="2" ref="1">
    <original>KALAEARALAQ</original>
    <variation>RRGRGPGAGE</variation>
    <location>
        <begin position="268"/>
        <end position="278"/>
    </location>
</feature>
<feature type="sequence conflict" description="In Ref. 1; CAA30919." evidence="2" ref="1">
    <original>G</original>
    <variation>R</variation>
    <location>
        <position position="284"/>
    </location>
</feature>
<feature type="sequence conflict" description="In Ref. 1; CAA30919." evidence="2" ref="1">
    <location>
        <position position="368"/>
    </location>
</feature>
<feature type="sequence conflict" description="In Ref. 1; CAA30919." evidence="2" ref="1">
    <original>VGGEDP</original>
    <variation>WAAKIR</variation>
    <location>
        <begin position="376"/>
        <end position="381"/>
    </location>
</feature>
<comment type="function">
    <text>Sigma factors are initiation factors that promote the attachment of RNA polymerase to specific initiation sites and are then released. This sigma factor is responsible for the expression of the nitrogen fixation genes. The open complex (sigma-54 and core RNA polymerase) serves as the receptor for receipt of the melting signal from the remotely bound activator protein nifA for the expression of the nitrogen fixation proteins.</text>
</comment>
<comment type="similarity">
    <text evidence="2">Belongs to the sigma-54 factor family.</text>
</comment>
<proteinExistence type="inferred from homology"/>
<reference key="1">
    <citation type="journal article" date="1989" name="Mol. Gen. Genet.">
        <title>The DNA sequence of the Rhodobacter capsulatus ntrA, ntrB and ntrC gene analogues required for nitrogen fixation.</title>
        <authorList>
            <person name="Jones R."/>
            <person name="Haselkorn R."/>
        </authorList>
    </citation>
    <scope>NUCLEOTIDE SEQUENCE [GENOMIC DNA]</scope>
    <source>
        <strain>ATCC BAA-309 / NBRC 16581 / SB1003</strain>
    </source>
</reference>
<reference key="2">
    <citation type="journal article" date="2010" name="J. Bacteriol.">
        <title>Complete genome sequence of the photosynthetic purple nonsulfur bacterium Rhodobacter capsulatus SB 1003.</title>
        <authorList>
            <person name="Strnad H."/>
            <person name="Lapidus A."/>
            <person name="Paces J."/>
            <person name="Ulbrich P."/>
            <person name="Vlcek C."/>
            <person name="Paces V."/>
            <person name="Haselkorn R."/>
        </authorList>
    </citation>
    <scope>NUCLEOTIDE SEQUENCE [LARGE SCALE GENOMIC DNA]</scope>
    <source>
        <strain>ATCC BAA-309 / NBRC 16581 / SB1003</strain>
    </source>
</reference>
<organism>
    <name type="scientific">Rhodobacter capsulatus (strain ATCC BAA-309 / NBRC 16581 / SB1003)</name>
    <dbReference type="NCBI Taxonomy" id="272942"/>
    <lineage>
        <taxon>Bacteria</taxon>
        <taxon>Pseudomonadati</taxon>
        <taxon>Pseudomonadota</taxon>
        <taxon>Alphaproteobacteria</taxon>
        <taxon>Rhodobacterales</taxon>
        <taxon>Rhodobacter group</taxon>
        <taxon>Rhodobacter</taxon>
    </lineage>
</organism>
<accession>D5ANH9</accession>
<accession>P09433</accession>
<gene>
    <name type="primary">rpoN</name>
    <name type="synonym">nifR4</name>
    <name type="synonym">ntrA</name>
    <name type="ordered locus">RCAP_rcc00568</name>
</gene>
<evidence type="ECO:0000255" key="1"/>
<evidence type="ECO:0000305" key="2"/>